<proteinExistence type="evidence at protein level"/>
<organism>
    <name type="scientific">Pseudomonas sp</name>
    <dbReference type="NCBI Taxonomy" id="306"/>
    <lineage>
        <taxon>Bacteria</taxon>
        <taxon>Pseudomonadati</taxon>
        <taxon>Pseudomonadota</taxon>
        <taxon>Gammaproteobacteria</taxon>
        <taxon>Pseudomonadales</taxon>
        <taxon>Pseudomonadaceae</taxon>
        <taxon>Pseudomonas</taxon>
    </lineage>
</organism>
<accession>A4F2N8</accession>
<reference key="1">
    <citation type="journal article" date="2009" name="J. Biochem.">
        <title>Gene cloning and expression of pyridoxal 5'-phosphate-dependent L-threo-3-hydroxyaspartate dehydratase from Pseudomonas sp. T62, and characterization of the recombinant enzyme.</title>
        <authorList>
            <person name="Murakami T."/>
            <person name="Maeda T."/>
            <person name="Yokota A."/>
            <person name="Wada M."/>
        </authorList>
    </citation>
    <scope>NUCLEOTIDE SEQUENCE [GENOMIC DNA]</scope>
    <scope>FUNCTION</scope>
    <scope>CATALYTIC ACTIVITY</scope>
    <scope>SUBSTRATE SPECIFICITY</scope>
    <scope>BIOPHYSICOCHEMICAL PROPERTIES</scope>
    <scope>COFACTOR</scope>
    <scope>MUTAGENESIS OF LYS-53</scope>
    <source>
        <strain>T62</strain>
    </source>
</reference>
<reference key="2">
    <citation type="journal article" date="1999" name="FEMS Microbiol. Lett.">
        <title>Purification and characterization of a novel enzyme, L-threo-3-hydroxyaspartate dehydratase, from Pseudomonas sp. T62.</title>
        <authorList>
            <person name="Wada M."/>
            <person name="Matsumoto T."/>
            <person name="Nakamori S."/>
            <person name="Sakamoto M."/>
            <person name="Kataoka M."/>
            <person name="Liu J.Q."/>
            <person name="Itoh N."/>
            <person name="Yamada H."/>
            <person name="Shimizu S."/>
        </authorList>
    </citation>
    <scope>PROTEIN SEQUENCE OF 1-32</scope>
    <scope>FUNCTION</scope>
    <scope>CATALYTIC ACTIVITY</scope>
    <scope>SUBSTRATE SPECIFICITY</scope>
    <scope>BIOPHYSICOCHEMICAL PROPERTIES</scope>
    <scope>COFACTOR</scope>
    <scope>ACTIVITY REGULATION</scope>
    <scope>INDUCTION</scope>
    <scope>SUBUNIT</scope>
    <source>
        <strain>T62</strain>
    </source>
</reference>
<dbReference type="EC" id="4.3.1.16" evidence="2 3"/>
<dbReference type="EMBL" id="AB297468">
    <property type="protein sequence ID" value="BAF48772.1"/>
    <property type="molecule type" value="Genomic_DNA"/>
</dbReference>
<dbReference type="RefSeq" id="WP_003212540.1">
    <property type="nucleotide sequence ID" value="NZ_JAUWGQ010000106.1"/>
</dbReference>
<dbReference type="SMR" id="A4F2N8"/>
<dbReference type="KEGG" id="ag:BAF48772"/>
<dbReference type="BioCyc" id="MetaCyc:MONOMER-15941"/>
<dbReference type="BRENDA" id="4.3.1.16">
    <property type="organism ID" value="10694"/>
</dbReference>
<dbReference type="GO" id="GO:0005524">
    <property type="term" value="F:ATP binding"/>
    <property type="evidence" value="ECO:0007669"/>
    <property type="project" value="TreeGrafter"/>
</dbReference>
<dbReference type="GO" id="GO:0008721">
    <property type="term" value="F:D-serine ammonia-lyase activity"/>
    <property type="evidence" value="ECO:0007669"/>
    <property type="project" value="TreeGrafter"/>
</dbReference>
<dbReference type="GO" id="GO:0003941">
    <property type="term" value="F:L-serine ammonia-lyase activity"/>
    <property type="evidence" value="ECO:0007669"/>
    <property type="project" value="TreeGrafter"/>
</dbReference>
<dbReference type="GO" id="GO:0000287">
    <property type="term" value="F:magnesium ion binding"/>
    <property type="evidence" value="ECO:0007669"/>
    <property type="project" value="TreeGrafter"/>
</dbReference>
<dbReference type="GO" id="GO:0030170">
    <property type="term" value="F:pyridoxal phosphate binding"/>
    <property type="evidence" value="ECO:0000314"/>
    <property type="project" value="UniProtKB"/>
</dbReference>
<dbReference type="GO" id="GO:0030378">
    <property type="term" value="F:serine racemase activity"/>
    <property type="evidence" value="ECO:0007669"/>
    <property type="project" value="TreeGrafter"/>
</dbReference>
<dbReference type="GO" id="GO:0030848">
    <property type="term" value="F:threo-3-hydroxyaspartate ammonia-lyase activity"/>
    <property type="evidence" value="ECO:0000314"/>
    <property type="project" value="UniProtKB"/>
</dbReference>
<dbReference type="GO" id="GO:0018114">
    <property type="term" value="F:threonine racemase activity"/>
    <property type="evidence" value="ECO:0007669"/>
    <property type="project" value="TreeGrafter"/>
</dbReference>
<dbReference type="GO" id="GO:0006520">
    <property type="term" value="P:amino acid metabolic process"/>
    <property type="evidence" value="ECO:0007669"/>
    <property type="project" value="InterPro"/>
</dbReference>
<dbReference type="GO" id="GO:0042219">
    <property type="term" value="P:modified amino acid catabolic process"/>
    <property type="evidence" value="ECO:0000314"/>
    <property type="project" value="UniProtKB"/>
</dbReference>
<dbReference type="CDD" id="cd01562">
    <property type="entry name" value="Thr-dehyd"/>
    <property type="match status" value="1"/>
</dbReference>
<dbReference type="FunFam" id="3.40.50.1100:FF:000007">
    <property type="entry name" value="L-threonine dehydratase catabolic TdcB"/>
    <property type="match status" value="1"/>
</dbReference>
<dbReference type="FunFam" id="3.40.50.1100:FF:000005">
    <property type="entry name" value="Threonine dehydratase catabolic"/>
    <property type="match status" value="1"/>
</dbReference>
<dbReference type="Gene3D" id="3.40.50.1100">
    <property type="match status" value="2"/>
</dbReference>
<dbReference type="InterPro" id="IPR000634">
    <property type="entry name" value="Ser/Thr_deHydtase_PyrdxlP-BS"/>
</dbReference>
<dbReference type="InterPro" id="IPR001926">
    <property type="entry name" value="TrpB-like_PALP"/>
</dbReference>
<dbReference type="InterPro" id="IPR036052">
    <property type="entry name" value="TrpB-like_PALP_sf"/>
</dbReference>
<dbReference type="NCBIfam" id="NF005454">
    <property type="entry name" value="PRK07048.1"/>
    <property type="match status" value="1"/>
</dbReference>
<dbReference type="PANTHER" id="PTHR43050">
    <property type="entry name" value="SERINE / THREONINE RACEMASE FAMILY MEMBER"/>
    <property type="match status" value="1"/>
</dbReference>
<dbReference type="PANTHER" id="PTHR43050:SF1">
    <property type="entry name" value="SERINE RACEMASE"/>
    <property type="match status" value="1"/>
</dbReference>
<dbReference type="Pfam" id="PF00291">
    <property type="entry name" value="PALP"/>
    <property type="match status" value="1"/>
</dbReference>
<dbReference type="SUPFAM" id="SSF53686">
    <property type="entry name" value="Tryptophan synthase beta subunit-like PLP-dependent enzymes"/>
    <property type="match status" value="1"/>
</dbReference>
<dbReference type="PROSITE" id="PS00165">
    <property type="entry name" value="DEHYDRATASE_SER_THR"/>
    <property type="match status" value="1"/>
</dbReference>
<keyword id="KW-0903">Direct protein sequencing</keyword>
<keyword id="KW-0456">Lyase</keyword>
<keyword id="KW-0460">Magnesium</keyword>
<keyword id="KW-0464">Manganese</keyword>
<keyword id="KW-0663">Pyridoxal phosphate</keyword>
<feature type="chain" id="PRO_0000441721" description="L-threo-3-hydroxyaspartate ammonia-lyase">
    <location>
        <begin position="1"/>
        <end position="319"/>
    </location>
</feature>
<feature type="binding site" evidence="1">
    <location>
        <position position="80"/>
    </location>
    <ligand>
        <name>pyridoxal 5'-phosphate</name>
        <dbReference type="ChEBI" id="CHEBI:597326"/>
    </ligand>
</feature>
<feature type="binding site" evidence="1">
    <location>
        <begin position="179"/>
        <end position="183"/>
    </location>
    <ligand>
        <name>pyridoxal 5'-phosphate</name>
        <dbReference type="ChEBI" id="CHEBI:597326"/>
    </ligand>
</feature>
<feature type="binding site" evidence="1">
    <location>
        <position position="304"/>
    </location>
    <ligand>
        <name>pyridoxal 5'-phosphate</name>
        <dbReference type="ChEBI" id="CHEBI:597326"/>
    </ligand>
</feature>
<feature type="modified residue" description="N6-(pyridoxal phosphate)lysine" evidence="1 8">
    <location>
        <position position="53"/>
    </location>
</feature>
<feature type="mutagenesis site" description="Loss of enzymatic activity." evidence="3">
    <original>K</original>
    <variation>A</variation>
    <location>
        <position position="53"/>
    </location>
</feature>
<comment type="function">
    <text evidence="2 3">Catalyzes the deamination of L-threo-3-hydroxyaspartate to oxaloacetate and ammonia. Shows a high specificity towards L-threo-3-hydroxyaspartate as other 3-hydroxyaminoacids, i.e. D,L-erythro- and D-threo-3-hydroxyaspartate, D-threonine, L-threonine, D,L-allothreonine, D,L-threo-3-phenylserine, D-serine, and L-serine, are not substrates for this enzyme (PubMed:10481099, PubMed:19193709). Exhibits no detectable serine and aspartate racemase activity (PubMed:19193709). Might play a role in the detoxification of naturally occurring 3-hydroxyaspartate in Pseudomonas sp. T62 cells (PubMed:19193709).</text>
</comment>
<comment type="catalytic activity">
    <reaction evidence="2 3">
        <text>(3S)-3-hydroxy-L-aspartate = oxaloacetate + NH4(+)</text>
        <dbReference type="Rhea" id="RHEA:12424"/>
        <dbReference type="ChEBI" id="CHEBI:16452"/>
        <dbReference type="ChEBI" id="CHEBI:28938"/>
        <dbReference type="ChEBI" id="CHEBI:57251"/>
        <dbReference type="EC" id="4.3.1.16"/>
    </reaction>
</comment>
<comment type="cofactor">
    <cofactor evidence="2 3">
        <name>pyridoxal 5'-phosphate</name>
        <dbReference type="ChEBI" id="CHEBI:597326"/>
    </cofactor>
</comment>
<comment type="cofactor">
    <cofactor evidence="2 3">
        <name>Mn(2+)</name>
        <dbReference type="ChEBI" id="CHEBI:29035"/>
    </cofactor>
    <cofactor evidence="2 3">
        <name>Mg(2+)</name>
        <dbReference type="ChEBI" id="CHEBI:18420"/>
    </cofactor>
    <cofactor evidence="2 3">
        <name>Ca(2+)</name>
        <dbReference type="ChEBI" id="CHEBI:29108"/>
    </cofactor>
    <text evidence="2 3">Requires a divalent metal cation such as Mn(2+), Mg(2+), or Ca(2+).</text>
</comment>
<comment type="activity regulation">
    <text evidence="2">Is strongly inhibited by hydroxylamine and EDTA in vitro.</text>
</comment>
<comment type="biophysicochemical properties">
    <kinetics>
        <KM evidence="3">0.54 mM for L-threo-3-hydroxyaspartate</KM>
        <KM evidence="2">0.74 mM for L-threo-3-hydroxyaspartate</KM>
        <Vmax evidence="3">39.0 umol/min/mg enzyme</Vmax>
        <Vmax evidence="2">37.5 umol/min/mg enzyme</Vmax>
    </kinetics>
    <phDependence>
        <text evidence="3">Optimum pH is 9.0.</text>
    </phDependence>
    <temperatureDependence>
        <text evidence="3">Optimum temperature is 35 degrees Celsius.</text>
    </temperatureDependence>
</comment>
<comment type="subunit">
    <text evidence="3">May be either a monomer or a homodimer.</text>
</comment>
<comment type="induction">
    <text evidence="3">By D,L-threo-3-hydroxyaspartate.</text>
</comment>
<comment type="similarity">
    <text evidence="6">Belongs to the serine/threonine dehydratase family.</text>
</comment>
<protein>
    <recommendedName>
        <fullName evidence="7">L-threo-3-hydroxyaspartate ammonia-lyase</fullName>
        <ecNumber evidence="2 3">4.3.1.16</ecNumber>
    </recommendedName>
    <alternativeName>
        <fullName evidence="4 5">L-threo-3-hydroxyaspartate dehydratase</fullName>
        <shortName evidence="5">L-THA DH</shortName>
    </alternativeName>
</protein>
<evidence type="ECO:0000250" key="1">
    <source>
        <dbReference type="UniProtKB" id="P04968"/>
    </source>
</evidence>
<evidence type="ECO:0000269" key="2">
    <source>
    </source>
</evidence>
<evidence type="ECO:0000269" key="3">
    <source>
    </source>
</evidence>
<evidence type="ECO:0000303" key="4">
    <source>
    </source>
</evidence>
<evidence type="ECO:0000303" key="5">
    <source>
    </source>
</evidence>
<evidence type="ECO:0000305" key="6"/>
<evidence type="ECO:0000305" key="7">
    <source>
    </source>
</evidence>
<evidence type="ECO:0000305" key="8">
    <source>
    </source>
</evidence>
<evidence type="ECO:0000312" key="9">
    <source>
        <dbReference type="EMBL" id="BAF48772.1"/>
    </source>
</evidence>
<name>LTHAD_PSESP</name>
<sequence>MQLSSYHDVIKAAERLEGFANRTPVFTSRTLDAETGAQVFIKCENLQRTGSFKFRGAFNALSRFDEAQRKAGVVAFSSGNHAQGIALAARLLQMPATIVMPTDAPAAKVAATREYGATVVFYDRITEDREQIGRTLAEQHGMTLIPSYDHPDVLAGQGTAAKELLEFTGPLDALFVGLGGGGMLSGTALATRALSPDCLLYGVEPEAGNDGQRSFQTGSIVHIDTPATIADGAQTQHLGNHTFPIIRENVNDILTVSDAELVESMRFFMQRMKMVVEPTGCLGLAALRNLKQQFRGQRVGIIVTGGNVDIEKYASLLKG</sequence>
<gene>
    <name evidence="9" type="primary">thadh</name>
</gene>